<sequence>MGKSLSHLPLHSSKEDAYDGVTSENMRNGLVNSEVHNEDGRNGDVSQFPYVEFTGRDSVTCPTCQGTGRIPRGQENQLVALIPYSDQRLRPRRTKLYVMASVFVCLLLSGLAVFFLFPRSIDVKYIGVKSAYVSYDVQKRTIYLNITNTLNITNNNYYSVEVENITAQVQFSKTVIGKARLNNITIIGPLDMKQIDYTVPTVIAEEMSYMYDFCTLISIKVHNIVLMMQVTVTTTYFGHSEQISQERYQYVDCGRNTTYQLGQSEYLNVLQPQQ</sequence>
<name>T106B_HUMAN</name>
<gene>
    <name evidence="29" type="primary">TMEM106B</name>
</gene>
<accession>Q9NUM4</accession>
<accession>A4D108</accession>
<accession>Q53FL9</accession>
<accession>Q8N4L0</accession>
<organism>
    <name type="scientific">Homo sapiens</name>
    <name type="common">Human</name>
    <dbReference type="NCBI Taxonomy" id="9606"/>
    <lineage>
        <taxon>Eukaryota</taxon>
        <taxon>Metazoa</taxon>
        <taxon>Chordata</taxon>
        <taxon>Craniata</taxon>
        <taxon>Vertebrata</taxon>
        <taxon>Euteleostomi</taxon>
        <taxon>Mammalia</taxon>
        <taxon>Eutheria</taxon>
        <taxon>Euarchontoglires</taxon>
        <taxon>Primates</taxon>
        <taxon>Haplorrhini</taxon>
        <taxon>Catarrhini</taxon>
        <taxon>Hominidae</taxon>
        <taxon>Homo</taxon>
    </lineage>
</organism>
<evidence type="ECO:0000250" key="1">
    <source>
        <dbReference type="UniProtKB" id="Q6AYA5"/>
    </source>
</evidence>
<evidence type="ECO:0000250" key="2">
    <source>
        <dbReference type="UniProtKB" id="Q80X71"/>
    </source>
</evidence>
<evidence type="ECO:0000255" key="3"/>
<evidence type="ECO:0000256" key="4">
    <source>
        <dbReference type="SAM" id="MobiDB-lite"/>
    </source>
</evidence>
<evidence type="ECO:0000269" key="5">
    <source>
    </source>
</evidence>
<evidence type="ECO:0000269" key="6">
    <source>
    </source>
</evidence>
<evidence type="ECO:0000269" key="7">
    <source>
    </source>
</evidence>
<evidence type="ECO:0000269" key="8">
    <source>
    </source>
</evidence>
<evidence type="ECO:0000269" key="9">
    <source>
    </source>
</evidence>
<evidence type="ECO:0000269" key="10">
    <source>
    </source>
</evidence>
<evidence type="ECO:0000269" key="11">
    <source>
    </source>
</evidence>
<evidence type="ECO:0000269" key="12">
    <source>
    </source>
</evidence>
<evidence type="ECO:0000269" key="13">
    <source>
    </source>
</evidence>
<evidence type="ECO:0000269" key="14">
    <source>
    </source>
</evidence>
<evidence type="ECO:0000269" key="15">
    <source>
    </source>
</evidence>
<evidence type="ECO:0000269" key="16">
    <source>
    </source>
</evidence>
<evidence type="ECO:0000269" key="17">
    <source>
    </source>
</evidence>
<evidence type="ECO:0000269" key="18">
    <source>
    </source>
</evidence>
<evidence type="ECO:0000269" key="19">
    <source>
    </source>
</evidence>
<evidence type="ECO:0000269" key="20">
    <source>
    </source>
</evidence>
<evidence type="ECO:0000269" key="21">
    <source>
    </source>
</evidence>
<evidence type="ECO:0000269" key="22">
    <source>
    </source>
</evidence>
<evidence type="ECO:0000269" key="23">
    <source>
    </source>
</evidence>
<evidence type="ECO:0000269" key="24">
    <source>
    </source>
</evidence>
<evidence type="ECO:0000269" key="25">
    <source>
    </source>
</evidence>
<evidence type="ECO:0000269" key="26">
    <source>
    </source>
</evidence>
<evidence type="ECO:0000303" key="27">
    <source>
    </source>
</evidence>
<evidence type="ECO:0000305" key="28"/>
<evidence type="ECO:0000312" key="29">
    <source>
        <dbReference type="HGNC" id="HGNC:22407"/>
    </source>
</evidence>
<evidence type="ECO:0007744" key="30">
    <source>
        <dbReference type="PDB" id="7QVC"/>
    </source>
</evidence>
<evidence type="ECO:0007744" key="31">
    <source>
        <dbReference type="PDB" id="7QVF"/>
    </source>
</evidence>
<evidence type="ECO:0007744" key="32">
    <source>
        <dbReference type="PDB" id="7QWG"/>
    </source>
</evidence>
<evidence type="ECO:0007744" key="33">
    <source>
        <dbReference type="PDB" id="7QWL"/>
    </source>
</evidence>
<evidence type="ECO:0007744" key="34">
    <source>
        <dbReference type="PDB" id="7QWM"/>
    </source>
</evidence>
<evidence type="ECO:0007744" key="35">
    <source>
        <dbReference type="PDB" id="7SAQ"/>
    </source>
</evidence>
<evidence type="ECO:0007744" key="36">
    <source>
        <dbReference type="PDB" id="7SAR"/>
    </source>
</evidence>
<evidence type="ECO:0007744" key="37">
    <source>
        <dbReference type="PDB" id="7SAS"/>
    </source>
</evidence>
<evidence type="ECO:0007744" key="38">
    <source>
        <dbReference type="PDB" id="7U10"/>
    </source>
</evidence>
<evidence type="ECO:0007744" key="39">
    <source>
        <dbReference type="PDB" id="7U11"/>
    </source>
</evidence>
<evidence type="ECO:0007744" key="40">
    <source>
        <dbReference type="PDB" id="7U12"/>
    </source>
</evidence>
<evidence type="ECO:0007744" key="41">
    <source>
        <dbReference type="PDB" id="7U13"/>
    </source>
</evidence>
<evidence type="ECO:0007744" key="42">
    <source>
        <dbReference type="PDB" id="7U14"/>
    </source>
</evidence>
<evidence type="ECO:0007744" key="43">
    <source>
        <dbReference type="PDB" id="7U15"/>
    </source>
</evidence>
<evidence type="ECO:0007744" key="44">
    <source>
        <dbReference type="PDB" id="7U16"/>
    </source>
</evidence>
<evidence type="ECO:0007744" key="45">
    <source>
        <dbReference type="PDB" id="7U17"/>
    </source>
</evidence>
<evidence type="ECO:0007744" key="46">
    <source>
    </source>
</evidence>
<evidence type="ECO:0007744" key="47">
    <source>
    </source>
</evidence>
<evidence type="ECO:0007744" key="48">
    <source>
    </source>
</evidence>
<evidence type="ECO:0007829" key="49">
    <source>
        <dbReference type="PDB" id="7QVC"/>
    </source>
</evidence>
<evidence type="ECO:0007829" key="50">
    <source>
        <dbReference type="PDB" id="7QWM"/>
    </source>
</evidence>
<evidence type="ECO:0007829" key="51">
    <source>
        <dbReference type="PDB" id="8B7D"/>
    </source>
</evidence>
<proteinExistence type="evidence at protein level"/>
<comment type="function">
    <text evidence="1 2 16">In neurons, involved in the transport of late endosomes/lysosomes (PubMed:25066864). May be involved in dendrite morphogenesis and maintenance by regulating lysosomal trafficking (PubMed:25066864). May act as a molecular brake for retrograde transport of late endosomes/lysosomes, possibly via its interaction with MAP6 (By similarity). In motoneurons, may mediate the axonal transport of lysosomes and axonal sorting at the initial segment (By similarity). It remains unclear whether TMEM106B affects the transport of moving lysosomes in the anterograde or retrograde direction in neurites and whether it is important in the sorting of lysosomes in axons or in dendrites (By similarity). In neurons, may also play a role in the regulation of lysosomal size and responsiveness to stress (PubMed:25066864). Required for proper lysosomal acidification (By similarity).</text>
</comment>
<comment type="function">
    <text evidence="21 22 26">(Microbial infection) Plays a role in human coronavirus SARS-CoV-2 infection, but not in common cold coronaviruses HCoV-229E and HCoV-OC43 infections. Involved in ACE2-independent SARS-CoV-2 cell entry. Required for post-endocytic stage of virus entry, facilitates spike-mediated membrane fusion. Virus attachment and endocytosis can also be mediated by other cell surface receptors.</text>
</comment>
<comment type="subunit">
    <text evidence="11 13 16 18">Can form homomers (PubMed:23136129, PubMed:25066864). Interacts (via N-terminus) with MAP6 (via C-terminus) (PubMed:24357581). Interacts (via C-terminus) with the vacuolar-type ATPase subunit ATP6AP1 (PubMed:28728022). Interacts (via N-terminus) with AP2M1 and CLTC (PubMed:25066864). Interacts with TMEM106C (PubMed:25066864).</text>
</comment>
<comment type="subunit">
    <text evidence="26">(Microbial infection) Interacts with SARS coronavirus-2/SARS-CoV-2 spike protein (via RBD domain).</text>
</comment>
<comment type="interaction">
    <interactant intactId="EBI-10490807">
        <id>Q9NUM4</id>
    </interactant>
    <interactant intactId="EBI-466029">
        <id>P42858</id>
        <label>HTT</label>
    </interactant>
    <organismsDiffer>false</organismsDiffer>
    <experiments>3</experiments>
</comment>
<comment type="interaction">
    <interactant intactId="EBI-10490807">
        <id>Q9NUM4</id>
    </interactant>
    <interactant intactId="EBI-2821497">
        <id>Q9BVX2</id>
        <label>TMEM106C</label>
    </interactant>
    <organismsDiffer>false</organismsDiffer>
    <experiments>4</experiments>
</comment>
<comment type="subcellular location">
    <subcellularLocation>
        <location evidence="9 11 16">Late endosome membrane</location>
        <topology evidence="9 11 16">Single-pass type II membrane protein</topology>
    </subcellularLocation>
    <subcellularLocation>
        <location evidence="9 16 26">Lysosome membrane</location>
        <topology evidence="9 11 16">Single-pass type II membrane protein</topology>
    </subcellularLocation>
    <subcellularLocation>
        <location evidence="26">Cell membrane</location>
        <topology evidence="3">Single-pass type II membrane protein</topology>
    </subcellularLocation>
    <text evidence="9 16 26">Colocalizes with LAMP1. A small fraction resides on the cell surface (PubMed:37421949).</text>
</comment>
<comment type="tissue specificity">
    <text evidence="22 23 25">Expressed in the brain, including in the frontal cortex (at protein level) (PubMed:35247328, PubMed:35344985). Expressed in lung epithelial cells (PubMed:33686287).</text>
</comment>
<comment type="disease" evidence="7 8 10 12">
    <disease id="DI-02402">
        <name>Frontotemporal dementia 2</name>
        <acronym>FTD2</acronym>
        <description>A form of dementia characterized by pathologic finding of frontotemporal lobar degeneration, presenile dementia with behavioral changes, deterioration of cognitive capacities and loss of memory. Gestural apraxia, parkinsonism, visual loss, and visual hallucinations are present in 25 to 40% of patients.</description>
        <dbReference type="MIM" id="607485"/>
    </disease>
    <text evidence="7 8 10 12">The gene represented in this entry may act as a disease modifier. Risk alleles confer genetic susceptibility by increasing gene expression (PubMed:20154673, PubMed:21178100). Increased expression may be the result of down-regulation of microRNA miR-132 and miR-212, that repress TMEM106B expression (PubMed:22895706). Thr-185 is a risk allele associated with lower GRN protein levels and early age at onset in GRN FTD2 mutation carriers: it presents slower protein degradation that leads to higher steady-state TMEM106B levels, leading to alterations in the intracellular versus extracellular partitioning of GRN (PubMed:23742080).</text>
</comment>
<comment type="disease" evidence="14 15 27">
    <disease id="DI-03247">
        <name>Frontotemporal dementia and/or amyotrophic lateral sclerosis 1</name>
        <acronym>FTDALS1</acronym>
        <description>An autosomal dominant neurodegenerative disorder characterized by adult onset of frontotemporal dementia and/or amyotrophic lateral sclerosis in an affected individual. There is high intrafamilial variation. Frontotemporal dementia is characterized by frontal and temporal lobe atrophy associated with neuronal loss, gliosis, and dementia. Patients exhibit progressive changes in social, behavioral, and/or language function. Amyotrophic lateral sclerosis is characterized by the death of motor neurons in the brain, brainstem, and spinal cord, resulting in fatal paralysis.</description>
        <dbReference type="MIM" id="105550"/>
    </disease>
    <text>The gene represented in this entry acts as a disease modifier.</text>
</comment>
<comment type="disease" evidence="19 20">
    <disease id="DI-05245">
        <name>Leukodystrophy, hypomyelinating, 16</name>
        <acronym>HLD16</acronym>
        <description>An autosomal dominant disorder characterized by hypomyelination, leukodystrophy, and thin corpus callosum observed on brain imaging. Clinical features include hypotonia, nystagmus, and mildly delayed motor development with onset in infancy, ataxic or broad-based gait, hyperreflexia, intention tremor, dysmetria, and a mild pyramidal syndrome. Some patients have cognitive impairment, whereas others may have normal cognition or mild intellectual disability with speech difficulties.</description>
        <dbReference type="MIM" id="617964"/>
    </disease>
    <text>The disease may be caused by variants affecting the gene represented in this entry.</text>
</comment>
<comment type="disease">
    <text evidence="23 24 25">A TMEM106B truncated C-terminal fragment (residues 120 through 254) was found to aggregate into stable amyloid fibrils in the brain of patients suffering from diverse genetic and sporadic tauopathies, amyloid-beta amyloidoses, synucleinopathies and TDP-43 proteinopathies. It is currently unclear whether TMEM106B fibrils are associated with a pathogenic process or represents a non-specific secondary phenomenon, a general downstream marker of lysosomal stress for instance (PubMed:35247328, PubMed:35344984, PubMed:35344985). TMEM106B amyloid filaments form in an age-dependent manner in human brains, however fibrillization of TMEM106B seems substantially greater in patients with known neurodegeneration compared to age-matched unaffected individuals (PubMed:35344985).</text>
</comment>
<comment type="similarity">
    <text evidence="28">Belongs to the TMEM106 family.</text>
</comment>
<protein>
    <recommendedName>
        <fullName evidence="28">Transmembrane protein 106B</fullName>
    </recommendedName>
</protein>
<reference key="1">
    <citation type="journal article" date="2004" name="Nat. Genet.">
        <title>Complete sequencing and characterization of 21,243 full-length human cDNAs.</title>
        <authorList>
            <person name="Ota T."/>
            <person name="Suzuki Y."/>
            <person name="Nishikawa T."/>
            <person name="Otsuki T."/>
            <person name="Sugiyama T."/>
            <person name="Irie R."/>
            <person name="Wakamatsu A."/>
            <person name="Hayashi K."/>
            <person name="Sato H."/>
            <person name="Nagai K."/>
            <person name="Kimura K."/>
            <person name="Makita H."/>
            <person name="Sekine M."/>
            <person name="Obayashi M."/>
            <person name="Nishi T."/>
            <person name="Shibahara T."/>
            <person name="Tanaka T."/>
            <person name="Ishii S."/>
            <person name="Yamamoto J."/>
            <person name="Saito K."/>
            <person name="Kawai Y."/>
            <person name="Isono Y."/>
            <person name="Nakamura Y."/>
            <person name="Nagahari K."/>
            <person name="Murakami K."/>
            <person name="Yasuda T."/>
            <person name="Iwayanagi T."/>
            <person name="Wagatsuma M."/>
            <person name="Shiratori A."/>
            <person name="Sudo H."/>
            <person name="Hosoiri T."/>
            <person name="Kaku Y."/>
            <person name="Kodaira H."/>
            <person name="Kondo H."/>
            <person name="Sugawara M."/>
            <person name="Takahashi M."/>
            <person name="Kanda K."/>
            <person name="Yokoi T."/>
            <person name="Furuya T."/>
            <person name="Kikkawa E."/>
            <person name="Omura Y."/>
            <person name="Abe K."/>
            <person name="Kamihara K."/>
            <person name="Katsuta N."/>
            <person name="Sato K."/>
            <person name="Tanikawa M."/>
            <person name="Yamazaki M."/>
            <person name="Ninomiya K."/>
            <person name="Ishibashi T."/>
            <person name="Yamashita H."/>
            <person name="Murakawa K."/>
            <person name="Fujimori K."/>
            <person name="Tanai H."/>
            <person name="Kimata M."/>
            <person name="Watanabe M."/>
            <person name="Hiraoka S."/>
            <person name="Chiba Y."/>
            <person name="Ishida S."/>
            <person name="Ono Y."/>
            <person name="Takiguchi S."/>
            <person name="Watanabe S."/>
            <person name="Yosida M."/>
            <person name="Hotuta T."/>
            <person name="Kusano J."/>
            <person name="Kanehori K."/>
            <person name="Takahashi-Fujii A."/>
            <person name="Hara H."/>
            <person name="Tanase T.-O."/>
            <person name="Nomura Y."/>
            <person name="Togiya S."/>
            <person name="Komai F."/>
            <person name="Hara R."/>
            <person name="Takeuchi K."/>
            <person name="Arita M."/>
            <person name="Imose N."/>
            <person name="Musashino K."/>
            <person name="Yuuki H."/>
            <person name="Oshima A."/>
            <person name="Sasaki N."/>
            <person name="Aotsuka S."/>
            <person name="Yoshikawa Y."/>
            <person name="Matsunawa H."/>
            <person name="Ichihara T."/>
            <person name="Shiohata N."/>
            <person name="Sano S."/>
            <person name="Moriya S."/>
            <person name="Momiyama H."/>
            <person name="Satoh N."/>
            <person name="Takami S."/>
            <person name="Terashima Y."/>
            <person name="Suzuki O."/>
            <person name="Nakagawa S."/>
            <person name="Senoh A."/>
            <person name="Mizoguchi H."/>
            <person name="Goto Y."/>
            <person name="Shimizu F."/>
            <person name="Wakebe H."/>
            <person name="Hishigaki H."/>
            <person name="Watanabe T."/>
            <person name="Sugiyama A."/>
            <person name="Takemoto M."/>
            <person name="Kawakami B."/>
            <person name="Yamazaki M."/>
            <person name="Watanabe K."/>
            <person name="Kumagai A."/>
            <person name="Itakura S."/>
            <person name="Fukuzumi Y."/>
            <person name="Fujimori Y."/>
            <person name="Komiyama M."/>
            <person name="Tashiro H."/>
            <person name="Tanigami A."/>
            <person name="Fujiwara T."/>
            <person name="Ono T."/>
            <person name="Yamada K."/>
            <person name="Fujii Y."/>
            <person name="Ozaki K."/>
            <person name="Hirao M."/>
            <person name="Ohmori Y."/>
            <person name="Kawabata A."/>
            <person name="Hikiji T."/>
            <person name="Kobatake N."/>
            <person name="Inagaki H."/>
            <person name="Ikema Y."/>
            <person name="Okamoto S."/>
            <person name="Okitani R."/>
            <person name="Kawakami T."/>
            <person name="Noguchi S."/>
            <person name="Itoh T."/>
            <person name="Shigeta K."/>
            <person name="Senba T."/>
            <person name="Matsumura K."/>
            <person name="Nakajima Y."/>
            <person name="Mizuno T."/>
            <person name="Morinaga M."/>
            <person name="Sasaki M."/>
            <person name="Togashi T."/>
            <person name="Oyama M."/>
            <person name="Hata H."/>
            <person name="Watanabe M."/>
            <person name="Komatsu T."/>
            <person name="Mizushima-Sugano J."/>
            <person name="Satoh T."/>
            <person name="Shirai Y."/>
            <person name="Takahashi Y."/>
            <person name="Nakagawa K."/>
            <person name="Okumura K."/>
            <person name="Nagase T."/>
            <person name="Nomura N."/>
            <person name="Kikuchi H."/>
            <person name="Masuho Y."/>
            <person name="Yamashita R."/>
            <person name="Nakai K."/>
            <person name="Yada T."/>
            <person name="Nakamura Y."/>
            <person name="Ohara O."/>
            <person name="Isogai T."/>
            <person name="Sugano S."/>
        </authorList>
    </citation>
    <scope>NUCLEOTIDE SEQUENCE [LARGE SCALE MRNA]</scope>
    <scope>VARIANT SER-185</scope>
    <source>
        <tissue>Placenta</tissue>
    </source>
</reference>
<reference key="2">
    <citation type="submission" date="2005-04" db="EMBL/GenBank/DDBJ databases">
        <authorList>
            <person name="Suzuki Y."/>
            <person name="Sugano S."/>
            <person name="Totoki Y."/>
            <person name="Toyoda A."/>
            <person name="Takeda T."/>
            <person name="Sakaki Y."/>
            <person name="Tanaka A."/>
            <person name="Yokoyama S."/>
        </authorList>
    </citation>
    <scope>NUCLEOTIDE SEQUENCE [LARGE SCALE MRNA]</scope>
    <source>
        <tissue>Gastric mucosa</tissue>
    </source>
</reference>
<reference key="3">
    <citation type="journal article" date="2003" name="Science">
        <title>Human chromosome 7: DNA sequence and biology.</title>
        <authorList>
            <person name="Scherer S.W."/>
            <person name="Cheung J."/>
            <person name="MacDonald J.R."/>
            <person name="Osborne L.R."/>
            <person name="Nakabayashi K."/>
            <person name="Herbrick J.-A."/>
            <person name="Carson A.R."/>
            <person name="Parker-Katiraee L."/>
            <person name="Skaug J."/>
            <person name="Khaja R."/>
            <person name="Zhang J."/>
            <person name="Hudek A.K."/>
            <person name="Li M."/>
            <person name="Haddad M."/>
            <person name="Duggan G.E."/>
            <person name="Fernandez B.A."/>
            <person name="Kanematsu E."/>
            <person name="Gentles S."/>
            <person name="Christopoulos C.C."/>
            <person name="Choufani S."/>
            <person name="Kwasnicka D."/>
            <person name="Zheng X.H."/>
            <person name="Lai Z."/>
            <person name="Nusskern D.R."/>
            <person name="Zhang Q."/>
            <person name="Gu Z."/>
            <person name="Lu F."/>
            <person name="Zeesman S."/>
            <person name="Nowaczyk M.J."/>
            <person name="Teshima I."/>
            <person name="Chitayat D."/>
            <person name="Shuman C."/>
            <person name="Weksberg R."/>
            <person name="Zackai E.H."/>
            <person name="Grebe T.A."/>
            <person name="Cox S.R."/>
            <person name="Kirkpatrick S.J."/>
            <person name="Rahman N."/>
            <person name="Friedman J.M."/>
            <person name="Heng H.H.Q."/>
            <person name="Pelicci P.G."/>
            <person name="Lo-Coco F."/>
            <person name="Belloni E."/>
            <person name="Shaffer L.G."/>
            <person name="Pober B."/>
            <person name="Morton C.C."/>
            <person name="Gusella J.F."/>
            <person name="Bruns G.A.P."/>
            <person name="Korf B.R."/>
            <person name="Quade B.J."/>
            <person name="Ligon A.H."/>
            <person name="Ferguson H."/>
            <person name="Higgins A.W."/>
            <person name="Leach N.T."/>
            <person name="Herrick S.R."/>
            <person name="Lemyre E."/>
            <person name="Farra C.G."/>
            <person name="Kim H.-G."/>
            <person name="Summers A.M."/>
            <person name="Gripp K.W."/>
            <person name="Roberts W."/>
            <person name="Szatmari P."/>
            <person name="Winsor E.J.T."/>
            <person name="Grzeschik K.-H."/>
            <person name="Teebi A."/>
            <person name="Minassian B.A."/>
            <person name="Kere J."/>
            <person name="Armengol L."/>
            <person name="Pujana M.A."/>
            <person name="Estivill X."/>
            <person name="Wilson M.D."/>
            <person name="Koop B.F."/>
            <person name="Tosi S."/>
            <person name="Moore G.E."/>
            <person name="Boright A.P."/>
            <person name="Zlotorynski E."/>
            <person name="Kerem B."/>
            <person name="Kroisel P.M."/>
            <person name="Petek E."/>
            <person name="Oscier D.G."/>
            <person name="Mould S.J."/>
            <person name="Doehner H."/>
            <person name="Doehner K."/>
            <person name="Rommens J.M."/>
            <person name="Vincent J.B."/>
            <person name="Venter J.C."/>
            <person name="Li P.W."/>
            <person name="Mural R.J."/>
            <person name="Adams M.D."/>
            <person name="Tsui L.-C."/>
        </authorList>
    </citation>
    <scope>NUCLEOTIDE SEQUENCE [LARGE SCALE GENOMIC DNA]</scope>
</reference>
<reference key="4">
    <citation type="submission" date="2005-07" db="EMBL/GenBank/DDBJ databases">
        <authorList>
            <person name="Mural R.J."/>
            <person name="Istrail S."/>
            <person name="Sutton G.G."/>
            <person name="Florea L."/>
            <person name="Halpern A.L."/>
            <person name="Mobarry C.M."/>
            <person name="Lippert R."/>
            <person name="Walenz B."/>
            <person name="Shatkay H."/>
            <person name="Dew I."/>
            <person name="Miller J.R."/>
            <person name="Flanigan M.J."/>
            <person name="Edwards N.J."/>
            <person name="Bolanos R."/>
            <person name="Fasulo D."/>
            <person name="Halldorsson B.V."/>
            <person name="Hannenhalli S."/>
            <person name="Turner R."/>
            <person name="Yooseph S."/>
            <person name="Lu F."/>
            <person name="Nusskern D.R."/>
            <person name="Shue B.C."/>
            <person name="Zheng X.H."/>
            <person name="Zhong F."/>
            <person name="Delcher A.L."/>
            <person name="Huson D.H."/>
            <person name="Kravitz S.A."/>
            <person name="Mouchard L."/>
            <person name="Reinert K."/>
            <person name="Remington K.A."/>
            <person name="Clark A.G."/>
            <person name="Waterman M.S."/>
            <person name="Eichler E.E."/>
            <person name="Adams M.D."/>
            <person name="Hunkapiller M.W."/>
            <person name="Myers E.W."/>
            <person name="Venter J.C."/>
        </authorList>
    </citation>
    <scope>NUCLEOTIDE SEQUENCE [LARGE SCALE GENOMIC DNA]</scope>
</reference>
<reference key="5">
    <citation type="journal article" date="2003" name="Nature">
        <title>The DNA sequence of human chromosome 7.</title>
        <authorList>
            <person name="Hillier L.W."/>
            <person name="Fulton R.S."/>
            <person name="Fulton L.A."/>
            <person name="Graves T.A."/>
            <person name="Pepin K.H."/>
            <person name="Wagner-McPherson C."/>
            <person name="Layman D."/>
            <person name="Maas J."/>
            <person name="Jaeger S."/>
            <person name="Walker R."/>
            <person name="Wylie K."/>
            <person name="Sekhon M."/>
            <person name="Becker M.C."/>
            <person name="O'Laughlin M.D."/>
            <person name="Schaller M.E."/>
            <person name="Fewell G.A."/>
            <person name="Delehaunty K.D."/>
            <person name="Miner T.L."/>
            <person name="Nash W.E."/>
            <person name="Cordes M."/>
            <person name="Du H."/>
            <person name="Sun H."/>
            <person name="Edwards J."/>
            <person name="Bradshaw-Cordum H."/>
            <person name="Ali J."/>
            <person name="Andrews S."/>
            <person name="Isak A."/>
            <person name="Vanbrunt A."/>
            <person name="Nguyen C."/>
            <person name="Du F."/>
            <person name="Lamar B."/>
            <person name="Courtney L."/>
            <person name="Kalicki J."/>
            <person name="Ozersky P."/>
            <person name="Bielicki L."/>
            <person name="Scott K."/>
            <person name="Holmes A."/>
            <person name="Harkins R."/>
            <person name="Harris A."/>
            <person name="Strong C.M."/>
            <person name="Hou S."/>
            <person name="Tomlinson C."/>
            <person name="Dauphin-Kohlberg S."/>
            <person name="Kozlowicz-Reilly A."/>
            <person name="Leonard S."/>
            <person name="Rohlfing T."/>
            <person name="Rock S.M."/>
            <person name="Tin-Wollam A.-M."/>
            <person name="Abbott A."/>
            <person name="Minx P."/>
            <person name="Maupin R."/>
            <person name="Strowmatt C."/>
            <person name="Latreille P."/>
            <person name="Miller N."/>
            <person name="Johnson D."/>
            <person name="Murray J."/>
            <person name="Woessner J.P."/>
            <person name="Wendl M.C."/>
            <person name="Yang S.-P."/>
            <person name="Schultz B.R."/>
            <person name="Wallis J.W."/>
            <person name="Spieth J."/>
            <person name="Bieri T.A."/>
            <person name="Nelson J.O."/>
            <person name="Berkowicz N."/>
            <person name="Wohldmann P.E."/>
            <person name="Cook L.L."/>
            <person name="Hickenbotham M.T."/>
            <person name="Eldred J."/>
            <person name="Williams D."/>
            <person name="Bedell J.A."/>
            <person name="Mardis E.R."/>
            <person name="Clifton S.W."/>
            <person name="Chissoe S.L."/>
            <person name="Marra M.A."/>
            <person name="Raymond C."/>
            <person name="Haugen E."/>
            <person name="Gillett W."/>
            <person name="Zhou Y."/>
            <person name="James R."/>
            <person name="Phelps K."/>
            <person name="Iadanoto S."/>
            <person name="Bubb K."/>
            <person name="Simms E."/>
            <person name="Levy R."/>
            <person name="Clendenning J."/>
            <person name="Kaul R."/>
            <person name="Kent W.J."/>
            <person name="Furey T.S."/>
            <person name="Baertsch R.A."/>
            <person name="Brent M.R."/>
            <person name="Keibler E."/>
            <person name="Flicek P."/>
            <person name="Bork P."/>
            <person name="Suyama M."/>
            <person name="Bailey J.A."/>
            <person name="Portnoy M.E."/>
            <person name="Torrents D."/>
            <person name="Chinwalla A.T."/>
            <person name="Gish W.R."/>
            <person name="Eddy S.R."/>
            <person name="McPherson J.D."/>
            <person name="Olson M.V."/>
            <person name="Eichler E.E."/>
            <person name="Green E.D."/>
            <person name="Waterston R.H."/>
            <person name="Wilson R.K."/>
        </authorList>
    </citation>
    <scope>NUCLEOTIDE SEQUENCE [LARGE SCALE GENOMIC DNA]</scope>
</reference>
<reference key="6">
    <citation type="journal article" date="2004" name="Genome Res.">
        <title>The status, quality, and expansion of the NIH full-length cDNA project: the Mammalian Gene Collection (MGC).</title>
        <authorList>
            <consortium name="The MGC Project Team"/>
        </authorList>
    </citation>
    <scope>NUCLEOTIDE SEQUENCE [LARGE SCALE MRNA]</scope>
    <source>
        <tissue>Brain</tissue>
        <tissue>Skin</tissue>
    </source>
</reference>
<reference key="7">
    <citation type="journal article" date="2006" name="Cell">
        <title>Global, in vivo, and site-specific phosphorylation dynamics in signaling networks.</title>
        <authorList>
            <person name="Olsen J.V."/>
            <person name="Blagoev B."/>
            <person name="Gnad F."/>
            <person name="Macek B."/>
            <person name="Kumar C."/>
            <person name="Mortensen P."/>
            <person name="Mann M."/>
        </authorList>
    </citation>
    <scope>PHOSPHORYLATION [LARGE SCALE ANALYSIS] AT SER-33</scope>
    <scope>IDENTIFICATION BY MASS SPECTROMETRY [LARGE SCALE ANALYSIS]</scope>
    <source>
        <tissue>Cervix carcinoma</tissue>
    </source>
</reference>
<reference key="8">
    <citation type="journal article" date="2009" name="J. Proteome Res.">
        <title>Glycoproteomics analysis of human liver tissue by combination of multiple enzyme digestion and hydrazide chemistry.</title>
        <authorList>
            <person name="Chen R."/>
            <person name="Jiang X."/>
            <person name="Sun D."/>
            <person name="Han G."/>
            <person name="Wang F."/>
            <person name="Ye M."/>
            <person name="Wang L."/>
            <person name="Zou H."/>
        </authorList>
    </citation>
    <scope>GLYCOSYLATION [LARGE SCALE ANALYSIS] AT ASN-183</scope>
    <source>
        <tissue>Liver</tissue>
    </source>
</reference>
<reference key="9">
    <citation type="journal article" date="2010" name="Nat. Genet.">
        <title>Common variants at 7p21 are associated with frontotemporal lobar degeneration with TDP-43 inclusions.</title>
        <authorList>
            <person name="Van Deerlin V.M."/>
            <person name="Sleiman P.M."/>
            <person name="Martinez-Lage M."/>
            <person name="Chen-Plotkin A."/>
            <person name="Wang L.S."/>
            <person name="Graff-Radford N.R."/>
            <person name="Dickson D.W."/>
            <person name="Rademakers R."/>
            <person name="Boeve B.F."/>
            <person name="Grossman M."/>
            <person name="Arnold S.E."/>
            <person name="Mann D.M."/>
            <person name="Pickering-Brown S.M."/>
            <person name="Seelaar H."/>
            <person name="Heutink P."/>
            <person name="van Swieten J.C."/>
            <person name="Murrell J.R."/>
            <person name="Ghetti B."/>
            <person name="Spina S."/>
            <person name="Grafman J."/>
            <person name="Hodges J."/>
            <person name="Spillantini M.G."/>
            <person name="Gilman S."/>
            <person name="Lieberman A.P."/>
            <person name="Kaye J.A."/>
            <person name="Woltjer R.L."/>
            <person name="Bigio E.H."/>
            <person name="Mesulam M."/>
            <person name="Al-Sarraj S."/>
            <person name="Troakes C."/>
            <person name="Rosenberg R.N."/>
            <person name="White C.L. III"/>
            <person name="Ferrer I."/>
            <person name="Llado A."/>
            <person name="Neumann M."/>
            <person name="Kretzschmar H.A."/>
            <person name="Hulette C.M."/>
            <person name="Welsh-Bohmer K.A."/>
            <person name="Miller B.L."/>
            <person name="Alzualde A."/>
            <person name="de Munain A.L."/>
            <person name="McKee A.C."/>
            <person name="Gearing M."/>
            <person name="Levey A.I."/>
            <person name="Lah J.J."/>
            <person name="Hardy J."/>
            <person name="Rohrer J.D."/>
            <person name="Lashley T."/>
            <person name="Mackenzie I.R."/>
            <person name="Feldman H.H."/>
            <person name="Hamilton R.L."/>
            <person name="Dekosky S.T."/>
            <person name="van der Zee J."/>
            <person name="Kumar-Singh S."/>
            <person name="Van Broeckhoven C."/>
            <person name="Mayeux R."/>
            <person name="Vonsattel J.P."/>
            <person name="Troncoso J.C."/>
            <person name="Kril J.J."/>
            <person name="Kwok J.B."/>
            <person name="Halliday G.M."/>
            <person name="Bird T.D."/>
            <person name="Ince P.G."/>
            <person name="Shaw P.J."/>
            <person name="Cairns N.J."/>
            <person name="Morris J.C."/>
            <person name="McLean C.A."/>
            <person name="DeCarli C."/>
            <person name="Ellis W.G."/>
            <person name="Freeman S.H."/>
            <person name="Frosch M.P."/>
            <person name="Growdon J.H."/>
            <person name="Perl D.P."/>
            <person name="Sano M."/>
            <person name="Bennett D.A."/>
            <person name="Schneider J.A."/>
            <person name="Beach T.G."/>
            <person name="Reiman E.M."/>
            <person name="Woodruff B.K."/>
            <person name="Cummings J."/>
            <person name="Vinters H.V."/>
            <person name="Miller C.A."/>
            <person name="Chui H.C."/>
            <person name="Alafuzoff I."/>
            <person name="Hartikainen P."/>
            <person name="Seilhean D."/>
            <person name="Galasko D."/>
            <person name="Masliah E."/>
            <person name="Cotman C.W."/>
            <person name="Tunon M.T."/>
            <person name="Martinez M.C."/>
            <person name="Munoz D.G."/>
            <person name="Carroll S.L."/>
            <person name="Marson D."/>
            <person name="Riederer P.F."/>
            <person name="Bogdanovic N."/>
            <person name="Schellenberg G.D."/>
            <person name="Hakonarson H."/>
            <person name="Trojanowski J.Q."/>
            <person name="Lee V.M."/>
        </authorList>
    </citation>
    <scope>INVOLVEMENT IN FTD2</scope>
</reference>
<reference key="10">
    <citation type="journal article" date="2010" name="Sci. Signal.">
        <title>Quantitative phosphoproteomics reveals widespread full phosphorylation site occupancy during mitosis.</title>
        <authorList>
            <person name="Olsen J.V."/>
            <person name="Vermeulen M."/>
            <person name="Santamaria A."/>
            <person name="Kumar C."/>
            <person name="Miller M.L."/>
            <person name="Jensen L.J."/>
            <person name="Gnad F."/>
            <person name="Cox J."/>
            <person name="Jensen T.S."/>
            <person name="Nigg E.A."/>
            <person name="Brunak S."/>
            <person name="Mann M."/>
        </authorList>
    </citation>
    <scope>PHOSPHORYLATION [LARGE SCALE ANALYSIS] AT SER-33</scope>
    <scope>IDENTIFICATION BY MASS SPECTROMETRY [LARGE SCALE ANALYSIS]</scope>
    <source>
        <tissue>Cervix carcinoma</tissue>
    </source>
</reference>
<reference key="11">
    <citation type="journal article" date="2011" name="Neurology">
        <title>TMEM106B regulates progranulin levels and the penetrance of FTLD in GRN mutation carriers.</title>
        <authorList>
            <person name="Finch N."/>
            <person name="Carrasquillo M.M."/>
            <person name="Baker M."/>
            <person name="Rutherford N.J."/>
            <person name="Coppola G."/>
            <person name="Dejesus-Hernandez M."/>
            <person name="Crook R."/>
            <person name="Hunter T."/>
            <person name="Ghidoni R."/>
            <person name="Benussi L."/>
            <person name="Crook J."/>
            <person name="Finger E."/>
            <person name="Hantanpaa K.J."/>
            <person name="Karydas A.M."/>
            <person name="Sengdy P."/>
            <person name="Gonzalez J."/>
            <person name="Seeley W.W."/>
            <person name="Johnson N."/>
            <person name="Beach T.G."/>
            <person name="Mesulam M."/>
            <person name="Forloni G."/>
            <person name="Kertesz A."/>
            <person name="Knopman D.S."/>
            <person name="Uitti R."/>
            <person name="White C.L. III"/>
            <person name="Caselli R."/>
            <person name="Lippa C."/>
            <person name="Bigio E.H."/>
            <person name="Wszolek Z.K."/>
            <person name="Binetti G."/>
            <person name="Mackenzie I.R."/>
            <person name="Miller B.L."/>
            <person name="Boeve B.F."/>
            <person name="Younkin S.G."/>
            <person name="Dickson D.W."/>
            <person name="Petersen R.C."/>
            <person name="Graff-Radford N.R."/>
            <person name="Geschwind D.H."/>
            <person name="Rademakers R."/>
        </authorList>
    </citation>
    <scope>INVOLVEMENT IN FTD2</scope>
</reference>
<reference key="12">
    <citation type="journal article" date="2012" name="J. Biol. Chem.">
        <title>Membrane orientation and subcellular localization of transmembrane protein 106B (TMEM106B), a major risk factor for frontotemporal lobar degeneration.</title>
        <authorList>
            <person name="Lang C.M."/>
            <person name="Fellerer K."/>
            <person name="Schwenk B.M."/>
            <person name="Kuhn P.H."/>
            <person name="Kremmer E."/>
            <person name="Edbauer D."/>
            <person name="Capell A."/>
            <person name="Haass C."/>
        </authorList>
    </citation>
    <scope>SUBCELLULAR LOCATION</scope>
    <scope>TOPOLOGY</scope>
    <scope>GLYCOSYLATION AT ASN-145; ASN-151; ASN-164; ASN-183 AND ASN-256</scope>
</reference>
<reference key="13">
    <citation type="journal article" date="2012" name="J. Neurosci.">
        <title>TMEM106B, the risk gene for frontotemporal dementia, is regulated by the microRNA-132/212 cluster and affects progranulin pathways.</title>
        <authorList>
            <person name="Chen-Plotkin A.S."/>
            <person name="Unger T.L."/>
            <person name="Gallagher M.D."/>
            <person name="Bill E."/>
            <person name="Kwong L.K."/>
            <person name="Volpicelli-Daley L."/>
            <person name="Busch J.I."/>
            <person name="Akle S."/>
            <person name="Grossman M."/>
            <person name="Van Deerlin V."/>
            <person name="Trojanowski J.Q."/>
            <person name="Lee V.M."/>
        </authorList>
    </citation>
    <scope>INVOLVEMENT IN FTD2</scope>
</reference>
<reference key="14">
    <citation type="journal article" date="2013" name="Hum. Mol. Genet.">
        <title>The frontotemporal lobar degeneration risk factor, TMEM106B, regulates lysosomal morphology and function.</title>
        <authorList>
            <person name="Brady O.A."/>
            <person name="Zheng Y."/>
            <person name="Murphy K."/>
            <person name="Huang M."/>
            <person name="Hu F."/>
        </authorList>
    </citation>
    <scope>SUBCELLULAR LOCATION</scope>
    <scope>TOPOLOGY</scope>
    <scope>HOMOMERIZATION</scope>
</reference>
<reference key="15">
    <citation type="journal article" date="2013" name="J. Neurochem.">
        <title>TMEM106B p.T185S regulates TMEM106B protein levels: implications for frontotemporal dementia.</title>
        <authorList>
            <person name="Nicholson A.M."/>
            <person name="Finch N.A."/>
            <person name="Wojtas A."/>
            <person name="Baker M.C."/>
            <person name="Perkerson R.B."/>
            <person name="Castanedes-Casey M."/>
            <person name="Rousseau L."/>
            <person name="Benussi L."/>
            <person name="Binetti G."/>
            <person name="Ghidoni R."/>
            <person name="Hsiung G.Y."/>
            <person name="Mackenzie I.R."/>
            <person name="Finger E."/>
            <person name="Boeve B.F."/>
            <person name="Ertekin-Taner N."/>
            <person name="Graff-Radford N.R."/>
            <person name="Dickson D.W."/>
            <person name="Rademakers R."/>
        </authorList>
    </citation>
    <scope>INVOLVEMENT IN FTD2</scope>
    <scope>VARIANT SER-185</scope>
    <scope>SUBCELLULAR LOCATION</scope>
    <scope>GLYCOSYLATION AT ASN-183</scope>
</reference>
<reference key="16">
    <citation type="journal article" date="2013" name="J. Proteome Res.">
        <title>Toward a comprehensive characterization of a human cancer cell phosphoproteome.</title>
        <authorList>
            <person name="Zhou H."/>
            <person name="Di Palma S."/>
            <person name="Preisinger C."/>
            <person name="Peng M."/>
            <person name="Polat A.N."/>
            <person name="Heck A.J."/>
            <person name="Mohammed S."/>
        </authorList>
    </citation>
    <scope>PHOSPHORYLATION [LARGE SCALE ANALYSIS] AT SER-33</scope>
    <scope>IDENTIFICATION BY MASS SPECTROMETRY [LARGE SCALE ANALYSIS]</scope>
    <source>
        <tissue>Erythroleukemia</tissue>
    </source>
</reference>
<reference key="17">
    <citation type="journal article" date="2014" name="Acta Neuropathol.">
        <title>TMEM106B: a strong FTLD disease modifier.</title>
        <authorList>
            <person name="Deming Y."/>
            <person name="Cruchaga C."/>
        </authorList>
    </citation>
    <scope>INVOLVEMENT IN FTDALS1</scope>
</reference>
<reference key="18">
    <citation type="journal article" date="2014" name="Acta Neuropathol.">
        <title>TMEM106B is a genetic modifier of frontotemporal lobar degeneration with C9orf72 hexanucleotide repeat expansions.</title>
        <authorList>
            <person name="Gallagher M.D."/>
            <person name="Suh E."/>
            <person name="Grossman M."/>
            <person name="Elman L."/>
            <person name="McCluskey L."/>
            <person name="Van Swieten J.C."/>
            <person name="Al-Sarraj S."/>
            <person name="Neumann M."/>
            <person name="Gelpi E."/>
            <person name="Ghetti B."/>
            <person name="Rohrer J.D."/>
            <person name="Halliday G."/>
            <person name="Van Broeckhoven C."/>
            <person name="Seilhean D."/>
            <person name="Shaw P.J."/>
            <person name="Frosch M.P."/>
            <person name="Alafuzoff I."/>
            <person name="Antonell A."/>
            <person name="Bogdanovic N."/>
            <person name="Brooks W."/>
            <person name="Cairns N.J."/>
            <person name="Cooper-Knock J."/>
            <person name="Cotman C."/>
            <person name="Cras P."/>
            <person name="Cruts M."/>
            <person name="De Deyn P.P."/>
            <person name="Decarli C."/>
            <person name="Dobson-Stone C."/>
            <person name="Engelborghs S."/>
            <person name="Fox N."/>
            <person name="Galasko D."/>
            <person name="Gearing M."/>
            <person name="Gijselinck I."/>
            <person name="Grafman J."/>
            <person name="Hartikainen P."/>
            <person name="Hatanpaa K.J."/>
            <person name="Highley J.R."/>
            <person name="Hodges J."/>
            <person name="Hulette C."/>
            <person name="Ince P.G."/>
            <person name="Jin L.W."/>
            <person name="Kirby J."/>
            <person name="Kofler J."/>
            <person name="Kril J."/>
            <person name="Kwok J.B."/>
            <person name="Levey A."/>
            <person name="Lieberman A."/>
            <person name="Llado A."/>
            <person name="Martin J.J."/>
            <person name="Masliah E."/>
            <person name="McDermott C.J."/>
            <person name="McKee A."/>
            <person name="McLean C."/>
            <person name="Mead S."/>
            <person name="Miller C.A."/>
            <person name="Miller J."/>
            <person name="Munoz D.G."/>
            <person name="Murrell J."/>
            <person name="Paulson H."/>
            <person name="Piguet O."/>
            <person name="Rossor M."/>
            <person name="Sanchez-Valle R."/>
            <person name="Sano M."/>
            <person name="Schneider J."/>
            <person name="Silbert L.C."/>
            <person name="Spina S."/>
            <person name="van der Zee J."/>
            <person name="Van Langenhove T."/>
            <person name="Warren J."/>
            <person name="Wharton S.B."/>
            <person name="White Iii C.L."/>
            <person name="Woltjer R.L."/>
            <person name="Trojanowski J.Q."/>
            <person name="Lee V.M."/>
            <person name="Van Deerlin V."/>
            <person name="Chen-Plotkin A.S."/>
        </authorList>
    </citation>
    <scope>INVOLVEMENT IN FTDALS1</scope>
</reference>
<reference key="19">
    <citation type="journal article" date="2014" name="Acta Neuropathol.">
        <title>TMEM106B protects C9ORF72 expansion carriers against frontotemporal dementia.</title>
        <authorList>
            <person name="van Blitterswijk M."/>
            <person name="Mullen B."/>
            <person name="Nicholson A.M."/>
            <person name="Bieniek K.F."/>
            <person name="Heckman M.G."/>
            <person name="Baker M.C."/>
            <person name="Dejesus-Hernandez M."/>
            <person name="Finch N.A."/>
            <person name="Brown P.H."/>
            <person name="Murray M.E."/>
            <person name="Hsiung G.Y."/>
            <person name="Stewart H."/>
            <person name="Karydas A.M."/>
            <person name="Finger E."/>
            <person name="Kertesz A."/>
            <person name="Bigio E.H."/>
            <person name="Weintraub S."/>
            <person name="Mesulam M."/>
            <person name="Hatanpaa K.J."/>
            <person name="White Iii C.L."/>
            <person name="Strong M.J."/>
            <person name="Beach T.G."/>
            <person name="Wszolek Z.K."/>
            <person name="Lippa C."/>
            <person name="Caselli R."/>
            <person name="Petrucelli L."/>
            <person name="Josephs K.A."/>
            <person name="Parisi J.E."/>
            <person name="Knopman D.S."/>
            <person name="Petersen R.C."/>
            <person name="Mackenzie I.R."/>
            <person name="Seeley W.W."/>
            <person name="Grinberg L.T."/>
            <person name="Miller B.L."/>
            <person name="Boylan K.B."/>
            <person name="Graff-Radford N.R."/>
            <person name="Boeve B.F."/>
            <person name="Dickson D.W."/>
            <person name="Rademakers R."/>
        </authorList>
    </citation>
    <scope>INVOLVEMENT IN FTDALS1</scope>
</reference>
<reference key="20">
    <citation type="journal article" date="2014" name="EMBO J.">
        <title>The FTLD risk factor TMEM106B and MAP6 control dendritic trafficking of lysosomes.</title>
        <authorList>
            <person name="Schwenk B.M."/>
            <person name="Lang C.M."/>
            <person name="Hogl S."/>
            <person name="Tahirovic S."/>
            <person name="Orozco D."/>
            <person name="Rentzsch K."/>
            <person name="Lichtenthaler S.F."/>
            <person name="Hoogenraad C.C."/>
            <person name="Capell A."/>
            <person name="Haass C."/>
            <person name="Edbauer D."/>
        </authorList>
    </citation>
    <scope>INTERACTION WITH MAP6</scope>
</reference>
<reference key="21">
    <citation type="journal article" date="2014" name="Mol. Cell. Neurosci.">
        <title>Lysosome size, motility and stress response regulated by fronto-temporal dementia modifier TMEM106B.</title>
        <authorList>
            <person name="Stagi M."/>
            <person name="Klein Z.A."/>
            <person name="Gould T.J."/>
            <person name="Bewersdorf J."/>
            <person name="Strittmatter S.M."/>
        </authorList>
    </citation>
    <scope>FUNCTION</scope>
    <scope>INTERACTION WITH AP2M1; CLTC AND TMEM106C</scope>
    <scope>HOMOMERIZATION</scope>
    <scope>SUBCELLULAR LOCATION</scope>
    <scope>TOPOLOGY</scope>
</reference>
<reference key="22">
    <citation type="journal article" date="2014" name="Nat. Commun.">
        <title>Global profiling of co- and post-translationally N-myristoylated proteomes in human cells.</title>
        <authorList>
            <person name="Thinon E."/>
            <person name="Serwa R.A."/>
            <person name="Broncel M."/>
            <person name="Brannigan J.A."/>
            <person name="Brassat U."/>
            <person name="Wright M.H."/>
            <person name="Heal W.P."/>
            <person name="Wilkinson A.J."/>
            <person name="Mann D.J."/>
            <person name="Tate E.W."/>
        </authorList>
    </citation>
    <scope>MYRISTOYLATION AT GLY-2</scope>
    <scope>CLEAVAGE OF INITIATOR METHIONINE</scope>
    <scope>IDENTIFICATION BY MASS SPECTROMETRY</scope>
</reference>
<reference key="23">
    <citation type="journal article" date="2017" name="Neuron">
        <title>Loss of TMEM106B ameliorates lysosomal and frontotemporal dementia-related phenotypes in progranulin-deficient mice.</title>
        <authorList>
            <person name="Klein Z.A."/>
            <person name="Takahashi H."/>
            <person name="Ma M."/>
            <person name="Stagi M."/>
            <person name="Zhou M."/>
            <person name="Lam T.T."/>
            <person name="Strittmatter S.M."/>
        </authorList>
    </citation>
    <scope>INTERACTION WITH ATP6AP1</scope>
</reference>
<reference key="24">
    <citation type="journal article" date="2021" name="Cell">
        <title>Genetic Screens Identify Host Factors for SARS-CoV-2 and Common Cold Coronaviruses.</title>
        <authorList>
            <person name="Wang R."/>
            <person name="Simoneau C.R."/>
            <person name="Kulsuptrakul J."/>
            <person name="Bouhaddou M."/>
            <person name="Travisano K.A."/>
            <person name="Hayashi J.M."/>
            <person name="Carlson-Stevermer J."/>
            <person name="Zengel J.R."/>
            <person name="Richards C.M."/>
            <person name="Fozouni P."/>
            <person name="Oki J."/>
            <person name="Rodriguez L."/>
            <person name="Joehnk B."/>
            <person name="Walcott K."/>
            <person name="Holden K."/>
            <person name="Sil A."/>
            <person name="Carette J.E."/>
            <person name="Krogan N.J."/>
            <person name="Ott M."/>
            <person name="Puschnik A.S."/>
        </authorList>
    </citation>
    <scope>FUNCTION (MICROBIAL INFECTION)</scope>
</reference>
<reference key="25">
    <citation type="journal article" date="2021" name="Nat. Genet.">
        <title>Genome-wide CRISPR screening identifies TMEM106B as a proviral host factor for SARS-CoV-2.</title>
        <authorList>
            <person name="Baggen J."/>
            <person name="Persoons L."/>
            <person name="Vanstreels E."/>
            <person name="Jansen S."/>
            <person name="Van Looveren D."/>
            <person name="Boeckx B."/>
            <person name="Geudens V."/>
            <person name="De Man J."/>
            <person name="Jochmans D."/>
            <person name="Wauters J."/>
            <person name="Wauters E."/>
            <person name="Vanaudenaerde B.M."/>
            <person name="Lambrechts D."/>
            <person name="Neyts J."/>
            <person name="Dallmeier K."/>
            <person name="Thibaut H.J."/>
            <person name="Jacquemyn M."/>
            <person name="Maes P."/>
            <person name="Daelemans D."/>
        </authorList>
    </citation>
    <scope>FUNCTION (MICROBIAL INFECTION)</scope>
    <scope>TISSUE SPECIFICITY</scope>
</reference>
<reference evidence="38 39 40 41 42 43 44 45" key="26">
    <citation type="journal article" date="2022" name="Cell">
        <title>Homotypic fibrillization of TMEM106B across diverse neurodegenerative diseases.</title>
        <authorList>
            <person name="Chang A."/>
            <person name="Xiang X."/>
            <person name="Wang J."/>
            <person name="Lee C."/>
            <person name="Arakhamia T."/>
            <person name="Simjanoska M."/>
            <person name="Wang C."/>
            <person name="Carlomagno Y."/>
            <person name="Zhang G."/>
            <person name="Dhingra S."/>
            <person name="Thierry M."/>
            <person name="Perneel J."/>
            <person name="Heeman B."/>
            <person name="Forgrave L.M."/>
            <person name="DeTure M."/>
            <person name="DeMarco M.L."/>
            <person name="Cook C.N."/>
            <person name="Rademakers R."/>
            <person name="Dickson D.W."/>
            <person name="Petrucelli L."/>
            <person name="Stowell M.H.B."/>
            <person name="Mackenzie I.R.A."/>
            <person name="Fitzpatrick A.W.P."/>
        </authorList>
    </citation>
    <scope>STRUCTURE BY ELECTRON MICROSCOPY (2.70 ANGSTROMS) OF 120-254</scope>
    <scope>AGGREGATION IN NEURODEGENERATIVE DISEASES</scope>
    <scope>TISSUE SPECIFICITY</scope>
</reference>
<reference evidence="35 36 37" key="27">
    <citation type="journal article" date="2022" name="Nature">
        <title>Amyloid fibrils in FTLD-TDP are composed of TMEM106B and not TDP-43.</title>
        <authorList>
            <person name="Jiang Y.X."/>
            <person name="Cao Q."/>
            <person name="Sawaya M.R."/>
            <person name="Abskharon R."/>
            <person name="Ge P."/>
            <person name="DeTure M."/>
            <person name="Dickson D.W."/>
            <person name="Fu J.Y."/>
            <person name="Ogorzalek Loo R.R."/>
            <person name="Loo J.A."/>
            <person name="Loo J.A."/>
            <person name="Eisenberg D.S."/>
        </authorList>
    </citation>
    <scope>STRUCTURE BY ELECTRON MICROSCOPY (2.90 ANGSTROMS) OF 120-254</scope>
    <scope>AGGREGATION IN NEURODEGENERATIVE DISEASES</scope>
</reference>
<reference evidence="30 31 32 33 34" key="28">
    <citation type="journal article" date="2022" name="Nature">
        <title>Age-dependent formation of TMEM106B amyloid filaments in human brains.</title>
        <authorList>
            <person name="Schweighauser M."/>
            <person name="Arseni D."/>
            <person name="Bacioglu M."/>
            <person name="Huang M."/>
            <person name="Lovestam S."/>
            <person name="Shi Y."/>
            <person name="Yang Y."/>
            <person name="Zhang W."/>
            <person name="Kotecha A."/>
            <person name="Garringer H.J."/>
            <person name="Vidal R."/>
            <person name="Hallinan G.I."/>
            <person name="Newell K.L."/>
            <person name="Tarutani A."/>
            <person name="Murayama S."/>
            <person name="Miyazaki M."/>
            <person name="Saito Y."/>
            <person name="Yoshida M."/>
            <person name="Hasegawa K."/>
            <person name="Lashley T."/>
            <person name="Revesz T."/>
            <person name="Kovacs G.G."/>
            <person name="van Swieten J."/>
            <person name="Takao M."/>
            <person name="Hasegawa M."/>
            <person name="Ghetti B."/>
            <person name="Spillantini M.G."/>
            <person name="Ryskeldi-Falcon B."/>
            <person name="Murzin A.G."/>
            <person name="Goedert M."/>
            <person name="Scheres S.H.W."/>
        </authorList>
    </citation>
    <scope>STRUCTURE BY ELECTRON MICROSCOPY (2.64 ANGSTROMS) OF 120-254</scope>
    <scope>AGGREGATION IN NEURODEGENERATIVE DISEASES</scope>
    <scope>TISSUE SPECIFICITY</scope>
</reference>
<reference key="29">
    <citation type="journal article" date="2023" name="Cell">
        <title>TMEM106B is a receptor mediating ACE2-independent SARS-CoV-2 cell entry.</title>
        <authorList>
            <person name="Baggen J."/>
            <person name="Jacquemyn M."/>
            <person name="Persoons L."/>
            <person name="Vanstreels E."/>
            <person name="Pye V.E."/>
            <person name="Wrobel A.G."/>
            <person name="Calvaresi V."/>
            <person name="Martin S.R."/>
            <person name="Roustan C."/>
            <person name="Cronin N.B."/>
            <person name="Reading E."/>
            <person name="Thibaut H.J."/>
            <person name="Vercruysse T."/>
            <person name="Maes P."/>
            <person name="De Smet F."/>
            <person name="Yee A."/>
            <person name="Nivitchanyong T."/>
            <person name="Roell M."/>
            <person name="Franco-Hernandez N."/>
            <person name="Rhinn H."/>
            <person name="Mamchak A.A."/>
            <person name="Ah Young-Chapon M."/>
            <person name="Brown E."/>
            <person name="Cherepanov P."/>
            <person name="Daelemans D."/>
        </authorList>
    </citation>
    <scope>STRUCTURE BY ELECTRON MICROSCOPY (2.59 ANGSTROMS) OF 118-261</scope>
    <scope>FUNCTION (MICROBIAL INFECTION)</scope>
    <scope>INTERACTION WITH SARS-COV-2 SPIKE GLYCOPROTEIN (MICROBIAL INFECTION)</scope>
    <scope>SUBCELLULAR LOCATION</scope>
    <scope>MUTAGENESIS OF 210-MET--PHE-213; MET-210 AND PHE-213</scope>
</reference>
<reference key="30">
    <citation type="journal article" date="2017" name="Brain">
        <title>A recurrent de novo mutation in TMEM106B causes hypomyelinating leukodystrophy.</title>
        <authorList>
            <person name="Simons C."/>
            <person name="Dyment D."/>
            <person name="Bent S.J."/>
            <person name="Crawford J."/>
            <person name="D'Hooghe M."/>
            <person name="Kohlschuetter A."/>
            <person name="Venkateswaran S."/>
            <person name="Helman G."/>
            <person name="Poll-The B.T."/>
            <person name="Makowski C.C."/>
            <person name="Ito Y."/>
            <person name="Kernohan K."/>
            <person name="Hartley T."/>
            <person name="Waisfisz Q."/>
            <person name="Taft R.J."/>
            <person name="van der Knaap M.S."/>
            <person name="Wolf N.I."/>
        </authorList>
    </citation>
    <scope>INVOLVEMENT IN HLD16</scope>
    <scope>VARIANT HLD16 ASN-252</scope>
</reference>
<reference key="31">
    <citation type="journal article" date="2018" name="Brain">
        <title>The recurrent mutation in TMEM106B also causes hypomyelinating leukodystrophy in China and is a CpG hotspot.</title>
        <authorList>
            <person name="Yan H."/>
            <person name="Kubisiak T."/>
            <person name="Ji H."/>
            <person name="Xiao J."/>
            <person name="Wang J."/>
            <person name="Burmeister M."/>
        </authorList>
    </citation>
    <scope>INVOLVEMENT IN HLD16</scope>
    <scope>VARIANT HLD16 ASN-252</scope>
</reference>
<keyword id="KW-0002">3D-structure</keyword>
<keyword id="KW-0036">Amyotrophic lateral sclerosis</keyword>
<keyword id="KW-1003">Cell membrane</keyword>
<keyword id="KW-0225">Disease variant</keyword>
<keyword id="KW-1015">Disulfide bond</keyword>
<keyword id="KW-0967">Endosome</keyword>
<keyword id="KW-0325">Glycoprotein</keyword>
<keyword id="KW-1026">Leukodystrophy</keyword>
<keyword id="KW-0449">Lipoprotein</keyword>
<keyword id="KW-0458">Lysosome</keyword>
<keyword id="KW-0472">Membrane</keyword>
<keyword id="KW-0519">Myristate</keyword>
<keyword id="KW-0523">Neurodegeneration</keyword>
<keyword id="KW-0597">Phosphoprotein</keyword>
<keyword id="KW-1267">Proteomics identification</keyword>
<keyword id="KW-1185">Reference proteome</keyword>
<keyword id="KW-0735">Signal-anchor</keyword>
<keyword id="KW-0812">Transmembrane</keyword>
<keyword id="KW-1133">Transmembrane helix</keyword>
<keyword id="KW-0813">Transport</keyword>
<dbReference type="EMBL" id="AK002135">
    <property type="protein sequence ID" value="BAA92099.1"/>
    <property type="molecule type" value="mRNA"/>
</dbReference>
<dbReference type="EMBL" id="AK223263">
    <property type="protein sequence ID" value="BAD96983.1"/>
    <property type="molecule type" value="mRNA"/>
</dbReference>
<dbReference type="EMBL" id="AC007321">
    <property type="protein sequence ID" value="AAQ96840.1"/>
    <property type="molecule type" value="Genomic_DNA"/>
</dbReference>
<dbReference type="EMBL" id="CH236948">
    <property type="protein sequence ID" value="EAL24296.1"/>
    <property type="molecule type" value="Genomic_DNA"/>
</dbReference>
<dbReference type="EMBL" id="CH471073">
    <property type="protein sequence ID" value="EAW93638.1"/>
    <property type="molecule type" value="Genomic_DNA"/>
</dbReference>
<dbReference type="EMBL" id="BC033901">
    <property type="protein sequence ID" value="AAH33901.1"/>
    <property type="molecule type" value="mRNA"/>
</dbReference>
<dbReference type="EMBL" id="BC039741">
    <property type="protein sequence ID" value="AAH39741.1"/>
    <property type="molecule type" value="mRNA"/>
</dbReference>
<dbReference type="CCDS" id="CCDS5358.1"/>
<dbReference type="RefSeq" id="NP_001127704.1">
    <property type="nucleotide sequence ID" value="NM_001134232.2"/>
</dbReference>
<dbReference type="RefSeq" id="NP_060844.2">
    <property type="nucleotide sequence ID" value="NM_018374.3"/>
</dbReference>
<dbReference type="RefSeq" id="XP_005249846.1">
    <property type="nucleotide sequence ID" value="XM_005249789.1"/>
</dbReference>
<dbReference type="PDB" id="7QVC">
    <property type="method" value="EM"/>
    <property type="resolution" value="2.64 A"/>
    <property type="chains" value="A/B/C=120-254"/>
</dbReference>
<dbReference type="PDB" id="7QVF">
    <property type="method" value="EM"/>
    <property type="resolution" value="3.64 A"/>
    <property type="chains" value="A/B/C/D/E/F=120-254"/>
</dbReference>
<dbReference type="PDB" id="7QWG">
    <property type="method" value="EM"/>
    <property type="resolution" value="3.38 A"/>
    <property type="chains" value="A/B/C=120-254"/>
</dbReference>
<dbReference type="PDB" id="7QWL">
    <property type="method" value="EM"/>
    <property type="resolution" value="3.47 A"/>
    <property type="chains" value="A/B/C=120-254"/>
</dbReference>
<dbReference type="PDB" id="7QWM">
    <property type="method" value="EM"/>
    <property type="resolution" value="2.76 A"/>
    <property type="chains" value="A/B/C=120-254"/>
</dbReference>
<dbReference type="PDB" id="7SAQ">
    <property type="method" value="EM"/>
    <property type="resolution" value="2.90 A"/>
    <property type="chains" value="A/B/C/D/E=120-254"/>
</dbReference>
<dbReference type="PDB" id="7SAR">
    <property type="method" value="EM"/>
    <property type="resolution" value="3.20 A"/>
    <property type="chains" value="A/B/C/D/E/F/G/H/I/J=120-254"/>
</dbReference>
<dbReference type="PDB" id="7SAS">
    <property type="method" value="EM"/>
    <property type="resolution" value="3.70 A"/>
    <property type="chains" value="A/B/C/D/E/F/G/H/I/J=120-254"/>
</dbReference>
<dbReference type="PDB" id="7TMC">
    <property type="method" value="EM"/>
    <property type="resolution" value="3.25 A"/>
    <property type="chains" value="A/B/C=1-274"/>
</dbReference>
<dbReference type="PDB" id="7U10">
    <property type="method" value="EM"/>
    <property type="resolution" value="3.00 A"/>
    <property type="chains" value="A/B/C=120-254"/>
</dbReference>
<dbReference type="PDB" id="7U11">
    <property type="method" value="EM"/>
    <property type="resolution" value="3.20 A"/>
    <property type="chains" value="A/B/C=120-254"/>
</dbReference>
<dbReference type="PDB" id="7U12">
    <property type="method" value="EM"/>
    <property type="resolution" value="3.50 A"/>
    <property type="chains" value="A/B/C=120-254"/>
</dbReference>
<dbReference type="PDB" id="7U13">
    <property type="method" value="EM"/>
    <property type="resolution" value="2.90 A"/>
    <property type="chains" value="A/B/C=120-254"/>
</dbReference>
<dbReference type="PDB" id="7U14">
    <property type="method" value="EM"/>
    <property type="resolution" value="4.50 A"/>
    <property type="chains" value="A/B/C=120-254"/>
</dbReference>
<dbReference type="PDB" id="7U15">
    <property type="method" value="EM"/>
    <property type="resolution" value="3.00 A"/>
    <property type="chains" value="A/B/C=120-254"/>
</dbReference>
<dbReference type="PDB" id="7U16">
    <property type="method" value="EM"/>
    <property type="resolution" value="2.70 A"/>
    <property type="chains" value="A/B/C=120-254"/>
</dbReference>
<dbReference type="PDB" id="7U17">
    <property type="method" value="EM"/>
    <property type="resolution" value="3.00 A"/>
    <property type="chains" value="A/B/C=120-254"/>
</dbReference>
<dbReference type="PDB" id="7U18">
    <property type="method" value="EM"/>
    <property type="resolution" value="2.70 A"/>
    <property type="chains" value="A/B/C=120-254"/>
</dbReference>
<dbReference type="PDB" id="7X83">
    <property type="method" value="EM"/>
    <property type="resolution" value="3.40 A"/>
    <property type="chains" value="A/B/C=1-274"/>
</dbReference>
<dbReference type="PDB" id="7X84">
    <property type="method" value="EM"/>
    <property type="resolution" value="3.00 A"/>
    <property type="chains" value="A/B/C=120-254"/>
</dbReference>
<dbReference type="PDB" id="8B7D">
    <property type="method" value="X-ray"/>
    <property type="resolution" value="2.59 A"/>
    <property type="chains" value="A=118-274"/>
</dbReference>
<dbReference type="PDB" id="8F9K">
    <property type="method" value="EM"/>
    <property type="resolution" value="3.40 A"/>
    <property type="chains" value="A/B/C/D/E/F=1-274"/>
</dbReference>
<dbReference type="PDB" id="8J7N">
    <property type="method" value="EM"/>
    <property type="resolution" value="3.00 A"/>
    <property type="chains" value="A/B/C=1-274"/>
</dbReference>
<dbReference type="PDB" id="8J7P">
    <property type="method" value="EM"/>
    <property type="resolution" value="3.40 A"/>
    <property type="chains" value="A/B/C=1-274"/>
</dbReference>
<dbReference type="PDB" id="8OTD">
    <property type="method" value="EM"/>
    <property type="resolution" value="2.60 A"/>
    <property type="chains" value="A/B/C/D=1-274"/>
</dbReference>
<dbReference type="PDB" id="8OTE">
    <property type="method" value="EM"/>
    <property type="resolution" value="3.60 A"/>
    <property type="chains" value="A/B/C/D/E/F/G/H=1-274"/>
</dbReference>
<dbReference type="PDB" id="8X5H">
    <property type="method" value="EM"/>
    <property type="resolution" value="3.47 A"/>
    <property type="chains" value="A/B/C=1-274"/>
</dbReference>
<dbReference type="PDB" id="9FNB">
    <property type="method" value="EM"/>
    <property type="resolution" value="2.64 A"/>
    <property type="chains" value="A/B/C/D=120-254"/>
</dbReference>
<dbReference type="PDBsum" id="7QVC"/>
<dbReference type="PDBsum" id="7QVF"/>
<dbReference type="PDBsum" id="7QWG"/>
<dbReference type="PDBsum" id="7QWL"/>
<dbReference type="PDBsum" id="7QWM"/>
<dbReference type="PDBsum" id="7SAQ"/>
<dbReference type="PDBsum" id="7SAR"/>
<dbReference type="PDBsum" id="7SAS"/>
<dbReference type="PDBsum" id="7TMC"/>
<dbReference type="PDBsum" id="7U10"/>
<dbReference type="PDBsum" id="7U11"/>
<dbReference type="PDBsum" id="7U12"/>
<dbReference type="PDBsum" id="7U13"/>
<dbReference type="PDBsum" id="7U14"/>
<dbReference type="PDBsum" id="7U15"/>
<dbReference type="PDBsum" id="7U16"/>
<dbReference type="PDBsum" id="7U17"/>
<dbReference type="PDBsum" id="7U18"/>
<dbReference type="PDBsum" id="7X83"/>
<dbReference type="PDBsum" id="7X84"/>
<dbReference type="PDBsum" id="8B7D"/>
<dbReference type="PDBsum" id="8F9K"/>
<dbReference type="PDBsum" id="8J7N"/>
<dbReference type="PDBsum" id="8J7P"/>
<dbReference type="PDBsum" id="8OTD"/>
<dbReference type="PDBsum" id="8OTE"/>
<dbReference type="PDBsum" id="8X5H"/>
<dbReference type="PDBsum" id="9FNB"/>
<dbReference type="EMDB" id="EMD-14174"/>
<dbReference type="EMDB" id="EMD-14176"/>
<dbReference type="EMDB" id="EMD-14187"/>
<dbReference type="EMDB" id="EMD-14188"/>
<dbReference type="EMDB" id="EMD-14189"/>
<dbReference type="EMDB" id="EMD-17170"/>
<dbReference type="EMDB" id="EMD-17175"/>
<dbReference type="EMDB" id="EMD-17176"/>
<dbReference type="EMDB" id="EMD-24953"/>
<dbReference type="EMDB" id="EMD-24954"/>
<dbReference type="EMDB" id="EMD-24955"/>
<dbReference type="EMDB" id="EMD-25995"/>
<dbReference type="EMDB" id="EMD-26273"/>
<dbReference type="EMDB" id="EMD-26274"/>
<dbReference type="EMDB" id="EMD-26275"/>
<dbReference type="EMDB" id="EMD-26276"/>
<dbReference type="EMDB" id="EMD-26277"/>
<dbReference type="EMDB" id="EMD-26278"/>
<dbReference type="EMDB" id="EMD-26279"/>
<dbReference type="EMDB" id="EMD-28943"/>
<dbReference type="EMDB" id="EMD-33054"/>
<dbReference type="EMDB" id="EMD-33055"/>
<dbReference type="EMDB" id="EMD-36043"/>
<dbReference type="EMDB" id="EMD-36045"/>
<dbReference type="EMDB" id="EMD-38069"/>
<dbReference type="EMDB" id="EMD-50587"/>
<dbReference type="SMR" id="Q9NUM4"/>
<dbReference type="BioGRID" id="120093">
    <property type="interactions" value="342"/>
</dbReference>
<dbReference type="FunCoup" id="Q9NUM4">
    <property type="interactions" value="1015"/>
</dbReference>
<dbReference type="IntAct" id="Q9NUM4">
    <property type="interactions" value="39"/>
</dbReference>
<dbReference type="MINT" id="Q9NUM4"/>
<dbReference type="STRING" id="9606.ENSP00000379901"/>
<dbReference type="TCDB" id="9.B.23.1.1">
    <property type="family name" value="the tmem106 (tmem106) family"/>
</dbReference>
<dbReference type="GlyConnect" id="1849">
    <property type="glycosylation" value="19 N-Linked glycans (2 sites)"/>
</dbReference>
<dbReference type="GlyCosmos" id="Q9NUM4">
    <property type="glycosylation" value="6 sites, 20 glycans"/>
</dbReference>
<dbReference type="GlyGen" id="Q9NUM4">
    <property type="glycosylation" value="8 sites, 28 N-linked glycans (3 sites), 1 O-linked glycan (1 site)"/>
</dbReference>
<dbReference type="iPTMnet" id="Q9NUM4"/>
<dbReference type="PhosphoSitePlus" id="Q9NUM4"/>
<dbReference type="SwissPalm" id="Q9NUM4"/>
<dbReference type="BioMuta" id="TMEM106B"/>
<dbReference type="DMDM" id="109895058"/>
<dbReference type="jPOST" id="Q9NUM4"/>
<dbReference type="MassIVE" id="Q9NUM4"/>
<dbReference type="PaxDb" id="9606-ENSP00000379901"/>
<dbReference type="PeptideAtlas" id="Q9NUM4"/>
<dbReference type="ProteomicsDB" id="82695"/>
<dbReference type="Pumba" id="Q9NUM4"/>
<dbReference type="Antibodypedia" id="43908">
    <property type="antibodies" value="126 antibodies from 30 providers"/>
</dbReference>
<dbReference type="DNASU" id="54664"/>
<dbReference type="YCharOS" id="Q9NUM4">
    <property type="antibodies" value="Tested 6 antibodies from 5 manufacturers"/>
</dbReference>
<dbReference type="Ensembl" id="ENST00000396667.7">
    <property type="protein sequence ID" value="ENSP00000379901.2"/>
    <property type="gene ID" value="ENSG00000106460.20"/>
</dbReference>
<dbReference type="Ensembl" id="ENST00000396668.8">
    <property type="protein sequence ID" value="ENSP00000379902.3"/>
    <property type="gene ID" value="ENSG00000106460.20"/>
</dbReference>
<dbReference type="Ensembl" id="ENST00000444443.6">
    <property type="protein sequence ID" value="ENSP00000401302.2"/>
    <property type="gene ID" value="ENSG00000106460.20"/>
</dbReference>
<dbReference type="Ensembl" id="ENST00000704455.1">
    <property type="protein sequence ID" value="ENSP00000515905.1"/>
    <property type="gene ID" value="ENSG00000106460.20"/>
</dbReference>
<dbReference type="GeneID" id="54664"/>
<dbReference type="KEGG" id="hsa:54664"/>
<dbReference type="MANE-Select" id="ENST00000396668.8">
    <property type="protein sequence ID" value="ENSP00000379902.3"/>
    <property type="RefSeq nucleotide sequence ID" value="NM_001134232.2"/>
    <property type="RefSeq protein sequence ID" value="NP_001127704.1"/>
</dbReference>
<dbReference type="UCSC" id="uc003ssh.4">
    <property type="organism name" value="human"/>
</dbReference>
<dbReference type="AGR" id="HGNC:22407"/>
<dbReference type="CTD" id="54664"/>
<dbReference type="DisGeNET" id="54664"/>
<dbReference type="GeneCards" id="TMEM106B"/>
<dbReference type="HGNC" id="HGNC:22407">
    <property type="gene designation" value="TMEM106B"/>
</dbReference>
<dbReference type="HPA" id="ENSG00000106460">
    <property type="expression patterns" value="Low tissue specificity"/>
</dbReference>
<dbReference type="MalaCards" id="TMEM106B"/>
<dbReference type="MIM" id="105550">
    <property type="type" value="phenotype"/>
</dbReference>
<dbReference type="MIM" id="607485">
    <property type="type" value="phenotype"/>
</dbReference>
<dbReference type="MIM" id="613413">
    <property type="type" value="gene"/>
</dbReference>
<dbReference type="MIM" id="617964">
    <property type="type" value="phenotype"/>
</dbReference>
<dbReference type="neXtProt" id="NX_Q9NUM4"/>
<dbReference type="NIAGADS" id="ENSG00000106460"/>
<dbReference type="OpenTargets" id="ENSG00000106460"/>
<dbReference type="Orphanet" id="275864">
    <property type="disease" value="Behavioral variant of frontotemporal dementia"/>
</dbReference>
<dbReference type="Orphanet" id="100070">
    <property type="disease" value="Progressive non-fluent aphasia"/>
</dbReference>
<dbReference type="Orphanet" id="100069">
    <property type="disease" value="Semantic dementia"/>
</dbReference>
<dbReference type="PharmGKB" id="PA142670756"/>
<dbReference type="VEuPathDB" id="HostDB:ENSG00000106460"/>
<dbReference type="eggNOG" id="ENOG502QQRZ">
    <property type="taxonomic scope" value="Eukaryota"/>
</dbReference>
<dbReference type="GeneTree" id="ENSGT00940000158360"/>
<dbReference type="HOGENOM" id="CLU_089337_2_0_1"/>
<dbReference type="InParanoid" id="Q9NUM4"/>
<dbReference type="OMA" id="FGHSEQT"/>
<dbReference type="OrthoDB" id="508875at2759"/>
<dbReference type="PAN-GO" id="Q9NUM4">
    <property type="GO annotations" value="5 GO annotations based on evolutionary models"/>
</dbReference>
<dbReference type="PhylomeDB" id="Q9NUM4"/>
<dbReference type="TreeFam" id="TF328907"/>
<dbReference type="PathwayCommons" id="Q9NUM4"/>
<dbReference type="SignaLink" id="Q9NUM4"/>
<dbReference type="BioGRID-ORCS" id="54664">
    <property type="hits" value="25 hits in 1169 CRISPR screens"/>
</dbReference>
<dbReference type="ChiTaRS" id="TMEM106B">
    <property type="organism name" value="human"/>
</dbReference>
<dbReference type="GeneWiki" id="TMEM106B"/>
<dbReference type="GenomeRNAi" id="54664"/>
<dbReference type="Pharos" id="Q9NUM4">
    <property type="development level" value="Tbio"/>
</dbReference>
<dbReference type="PRO" id="PR:Q9NUM4"/>
<dbReference type="Proteomes" id="UP000005640">
    <property type="component" value="Chromosome 7"/>
</dbReference>
<dbReference type="RNAct" id="Q9NUM4">
    <property type="molecule type" value="protein"/>
</dbReference>
<dbReference type="Bgee" id="ENSG00000106460">
    <property type="expression patterns" value="Expressed in cauda epididymis and 213 other cell types or tissues"/>
</dbReference>
<dbReference type="ExpressionAtlas" id="Q9NUM4">
    <property type="expression patterns" value="baseline and differential"/>
</dbReference>
<dbReference type="GO" id="GO:0005768">
    <property type="term" value="C:endosome"/>
    <property type="evidence" value="ECO:0000314"/>
    <property type="project" value="HPA"/>
</dbReference>
<dbReference type="GO" id="GO:0031902">
    <property type="term" value="C:late endosome membrane"/>
    <property type="evidence" value="ECO:0007669"/>
    <property type="project" value="UniProtKB-SubCell"/>
</dbReference>
<dbReference type="GO" id="GO:0005765">
    <property type="term" value="C:lysosomal membrane"/>
    <property type="evidence" value="ECO:0000314"/>
    <property type="project" value="UniProtKB"/>
</dbReference>
<dbReference type="GO" id="GO:0005764">
    <property type="term" value="C:lysosome"/>
    <property type="evidence" value="ECO:0000314"/>
    <property type="project" value="HPA"/>
</dbReference>
<dbReference type="GO" id="GO:0005886">
    <property type="term" value="C:plasma membrane"/>
    <property type="evidence" value="ECO:0007669"/>
    <property type="project" value="UniProtKB-SubCell"/>
</dbReference>
<dbReference type="GO" id="GO:0051117">
    <property type="term" value="F:ATPase binding"/>
    <property type="evidence" value="ECO:0000353"/>
    <property type="project" value="MGI"/>
</dbReference>
<dbReference type="GO" id="GO:0048813">
    <property type="term" value="P:dendrite morphogenesis"/>
    <property type="evidence" value="ECO:0000315"/>
    <property type="project" value="UniProtKB"/>
</dbReference>
<dbReference type="GO" id="GO:0007042">
    <property type="term" value="P:lysosomal lumen acidification"/>
    <property type="evidence" value="ECO:0007669"/>
    <property type="project" value="Ensembl"/>
</dbReference>
<dbReference type="GO" id="GO:1905146">
    <property type="term" value="P:lysosomal protein catabolic process"/>
    <property type="evidence" value="ECO:0007669"/>
    <property type="project" value="Ensembl"/>
</dbReference>
<dbReference type="GO" id="GO:0007041">
    <property type="term" value="P:lysosomal transport"/>
    <property type="evidence" value="ECO:0000318"/>
    <property type="project" value="GO_Central"/>
</dbReference>
<dbReference type="GO" id="GO:0032418">
    <property type="term" value="P:lysosome localization"/>
    <property type="evidence" value="ECO:0000315"/>
    <property type="project" value="UniProtKB"/>
</dbReference>
<dbReference type="GO" id="GO:0007040">
    <property type="term" value="P:lysosome organization"/>
    <property type="evidence" value="ECO:0000318"/>
    <property type="project" value="GO_Central"/>
</dbReference>
<dbReference type="GO" id="GO:0070050">
    <property type="term" value="P:neuron cellular homeostasis"/>
    <property type="evidence" value="ECO:0007669"/>
    <property type="project" value="Ensembl"/>
</dbReference>
<dbReference type="GO" id="GO:1900006">
    <property type="term" value="P:positive regulation of dendrite development"/>
    <property type="evidence" value="ECO:0007669"/>
    <property type="project" value="Ensembl"/>
</dbReference>
<dbReference type="GO" id="GO:1905671">
    <property type="term" value="P:regulation of lysosome organization"/>
    <property type="evidence" value="ECO:0007669"/>
    <property type="project" value="Ensembl"/>
</dbReference>
<dbReference type="DisProt" id="DP02543"/>
<dbReference type="InterPro" id="IPR009790">
    <property type="entry name" value="TMEM106"/>
</dbReference>
<dbReference type="InterPro" id="IPR048509">
    <property type="entry name" value="TMEM106_C"/>
</dbReference>
<dbReference type="InterPro" id="IPR048511">
    <property type="entry name" value="TMEM106_N"/>
</dbReference>
<dbReference type="PANTHER" id="PTHR28556">
    <property type="entry name" value="TRANSMEMBRANE PROTEIN 106B"/>
    <property type="match status" value="1"/>
</dbReference>
<dbReference type="PANTHER" id="PTHR28556:SF1">
    <property type="entry name" value="TRANSMEMBRANE PROTEIN 106B"/>
    <property type="match status" value="1"/>
</dbReference>
<dbReference type="Pfam" id="PF07092">
    <property type="entry name" value="TMEM106"/>
    <property type="match status" value="1"/>
</dbReference>
<dbReference type="Pfam" id="PF21002">
    <property type="entry name" value="TMEM106_N"/>
    <property type="match status" value="1"/>
</dbReference>
<dbReference type="SUPFAM" id="SSF117070">
    <property type="entry name" value="LEA14-like"/>
    <property type="match status" value="1"/>
</dbReference>
<feature type="initiator methionine" description="Removed" evidence="17">
    <location>
        <position position="1"/>
    </location>
</feature>
<feature type="chain" id="PRO_0000242650" description="Transmembrane protein 106B">
    <location>
        <begin position="2"/>
        <end position="274"/>
    </location>
</feature>
<feature type="topological domain" description="Cytoplasmic" evidence="9 11 16">
    <location>
        <begin position="2"/>
        <end position="96"/>
    </location>
</feature>
<feature type="transmembrane region" description="Helical" evidence="3">
    <location>
        <begin position="97"/>
        <end position="117"/>
    </location>
</feature>
<feature type="topological domain" description="Lumenal" evidence="9 11 16">
    <location>
        <begin position="118"/>
        <end position="274"/>
    </location>
</feature>
<feature type="region of interest" description="Disordered" evidence="4">
    <location>
        <begin position="1"/>
        <end position="20"/>
    </location>
</feature>
<feature type="compositionally biased region" description="Low complexity" evidence="4">
    <location>
        <begin position="1"/>
        <end position="11"/>
    </location>
</feature>
<feature type="modified residue" description="Phosphoserine" evidence="46 47 48">
    <location>
        <position position="33"/>
    </location>
</feature>
<feature type="lipid moiety-binding region" description="N-myristoyl glycine" evidence="17">
    <location>
        <position position="2"/>
    </location>
</feature>
<feature type="glycosylation site" description="N-linked (GlcNAc...) asparagine" evidence="9">
    <location>
        <position position="145"/>
    </location>
</feature>
<feature type="glycosylation site" description="N-linked (GlcNAc...) asparagine" evidence="9">
    <location>
        <position position="151"/>
    </location>
</feature>
<feature type="glycosylation site" description="N-linked (GlcNAc...) asparagine" evidence="9">
    <location>
        <position position="164"/>
    </location>
</feature>
<feature type="glycosylation site" description="N-linked (GlcNAc...) asparagine" evidence="6 9 12">
    <location>
        <position position="183"/>
    </location>
</feature>
<feature type="glycosylation site" description="N-linked (GlcNAc...) asparagine" evidence="9">
    <location>
        <position position="256"/>
    </location>
</feature>
<feature type="disulfide bond" evidence="24">
    <location>
        <begin position="214"/>
        <end position="253"/>
    </location>
</feature>
<feature type="sequence variant" id="VAR_026849" description="In dbSNP:rs3173615." evidence="5 12">
    <original>T</original>
    <variation>S</variation>
    <location>
        <position position="185"/>
    </location>
</feature>
<feature type="sequence variant" id="VAR_081068" description="In HLD16; dbSNP:rs1554310600." evidence="19 20">
    <original>D</original>
    <variation>N</variation>
    <location>
        <position position="252"/>
    </location>
</feature>
<feature type="mutagenesis site" description="Highly decreased number of infected cells by SARS-CoV-2. No effect on infection with HCoV-229E." evidence="26">
    <original>MYDF</original>
    <variation>AYDA</variation>
    <location>
        <begin position="210"/>
        <end position="213"/>
    </location>
</feature>
<feature type="mutagenesis site" description="Decreased number of infected cells by SARS-CoV-2. No effect on infection with HCoV-229E." evidence="26">
    <original>M</original>
    <variation>A</variation>
    <location>
        <position position="210"/>
    </location>
</feature>
<feature type="mutagenesis site" description="Decreased number of infected cells by SARS-CoV-2. No effect on infection with HCoV-229E." evidence="26">
    <original>F</original>
    <variation>A</variation>
    <location>
        <position position="213"/>
    </location>
</feature>
<feature type="sequence conflict" description="In Ref. 2; BAD96983." evidence="28" ref="2">
    <original>Y</original>
    <variation>C</variation>
    <location>
        <position position="50"/>
    </location>
</feature>
<feature type="sequence conflict" description="In Ref. 2; BAD96983." evidence="28" ref="2">
    <original>L</original>
    <variation>P</variation>
    <location>
        <position position="106"/>
    </location>
</feature>
<feature type="sequence conflict" description="In Ref. 2; BAD96983." evidence="28" ref="2">
    <original>Y</original>
    <variation>N</variation>
    <location>
        <position position="197"/>
    </location>
</feature>
<feature type="strand" evidence="51">
    <location>
        <begin position="122"/>
        <end position="136"/>
    </location>
</feature>
<feature type="turn" evidence="51">
    <location>
        <begin position="137"/>
        <end position="140"/>
    </location>
</feature>
<feature type="strand" evidence="51">
    <location>
        <begin position="141"/>
        <end position="153"/>
    </location>
</feature>
<feature type="strand" evidence="51">
    <location>
        <begin position="156"/>
        <end position="158"/>
    </location>
</feature>
<feature type="strand" evidence="51">
    <location>
        <begin position="160"/>
        <end position="171"/>
    </location>
</feature>
<feature type="strand" evidence="51">
    <location>
        <begin position="174"/>
        <end position="183"/>
    </location>
</feature>
<feature type="strand" evidence="50">
    <location>
        <begin position="184"/>
        <end position="187"/>
    </location>
</feature>
<feature type="strand" evidence="51">
    <location>
        <begin position="192"/>
        <end position="203"/>
    </location>
</feature>
<feature type="helix" evidence="51">
    <location>
        <begin position="205"/>
        <end position="208"/>
    </location>
</feature>
<feature type="helix" evidence="51">
    <location>
        <begin position="209"/>
        <end position="214"/>
    </location>
</feature>
<feature type="strand" evidence="49">
    <location>
        <begin position="216"/>
        <end position="220"/>
    </location>
</feature>
<feature type="strand" evidence="51">
    <location>
        <begin position="223"/>
        <end position="236"/>
    </location>
</feature>
<feature type="strand" evidence="51">
    <location>
        <begin position="239"/>
        <end position="252"/>
    </location>
</feature>